<organism>
    <name type="scientific">Macaca nemestrina</name>
    <name type="common">Pig-tailed macaque</name>
    <dbReference type="NCBI Taxonomy" id="9545"/>
    <lineage>
        <taxon>Eukaryota</taxon>
        <taxon>Metazoa</taxon>
        <taxon>Chordata</taxon>
        <taxon>Craniata</taxon>
        <taxon>Vertebrata</taxon>
        <taxon>Euteleostomi</taxon>
        <taxon>Mammalia</taxon>
        <taxon>Eutheria</taxon>
        <taxon>Euarchontoglires</taxon>
        <taxon>Primates</taxon>
        <taxon>Haplorrhini</taxon>
        <taxon>Catarrhini</taxon>
        <taxon>Cercopithecidae</taxon>
        <taxon>Cercopithecinae</taxon>
        <taxon>Macaca</taxon>
    </lineage>
</organism>
<sequence>MAPSVPLVLLLVLLLSLAETPASAPAHQGRGGWTLNSAGYLLGPVLHLPQMGDQDRKRETALEILDLWKAIDGLPYSHPLQPSKRNVMEAFAKPEIGDLDVLSKKIPKEEDVLKS</sequence>
<dbReference type="EMBL" id="AF459739">
    <property type="protein sequence ID" value="AAL79533.1"/>
    <property type="molecule type" value="mRNA"/>
</dbReference>
<dbReference type="EMBL" id="DQ153216">
    <property type="protein sequence ID" value="ABA38685.1"/>
    <property type="molecule type" value="mRNA"/>
</dbReference>
<dbReference type="RefSeq" id="XP_011750255.1">
    <molecule id="Q8SQD7-1"/>
    <property type="nucleotide sequence ID" value="XM_011751953.3"/>
</dbReference>
<dbReference type="RefSeq" id="XP_070943365.1">
    <molecule id="Q8SQD7-1"/>
    <property type="nucleotide sequence ID" value="XM_071087264.1"/>
</dbReference>
<dbReference type="STRING" id="9545.ENSMNEP00000002747"/>
<dbReference type="Ensembl" id="ENSMNET00000013894.1">
    <molecule id="Q8SQD7-1"/>
    <property type="protein sequence ID" value="ENSMNEP00000002747.1"/>
    <property type="gene ID" value="ENSMNEG00000012763.1"/>
</dbReference>
<dbReference type="Ensembl" id="ENSMNET00000013910.1">
    <molecule id="Q8SQD7-2"/>
    <property type="protein sequence ID" value="ENSMNEP00000002752.1"/>
    <property type="gene ID" value="ENSMNEG00000012763.1"/>
</dbReference>
<dbReference type="GeneID" id="105488137"/>
<dbReference type="KEGG" id="mni:105488137"/>
<dbReference type="CTD" id="85569"/>
<dbReference type="GeneTree" id="ENSGT00390000016349"/>
<dbReference type="OMA" id="PQMSDQD"/>
<dbReference type="OrthoDB" id="12133at314294"/>
<dbReference type="Proteomes" id="UP000233120">
    <property type="component" value="Unassembled WGS sequence"/>
</dbReference>
<dbReference type="GO" id="GO:0005576">
    <property type="term" value="C:extracellular region"/>
    <property type="evidence" value="ECO:0007669"/>
    <property type="project" value="UniProtKB-SubCell"/>
</dbReference>
<dbReference type="GO" id="GO:0005179">
    <property type="term" value="F:hormone activity"/>
    <property type="evidence" value="ECO:0007669"/>
    <property type="project" value="UniProtKB-KW"/>
</dbReference>
<dbReference type="GO" id="GO:0061844">
    <property type="term" value="P:antimicrobial humoral immune response mediated by antimicrobial peptide"/>
    <property type="evidence" value="ECO:0007669"/>
    <property type="project" value="TreeGrafter"/>
</dbReference>
<dbReference type="GO" id="GO:0042595">
    <property type="term" value="P:behavioral response to starvation"/>
    <property type="evidence" value="ECO:0007669"/>
    <property type="project" value="Ensembl"/>
</dbReference>
<dbReference type="GO" id="GO:0050829">
    <property type="term" value="P:defense response to Gram-negative bacterium"/>
    <property type="evidence" value="ECO:0007669"/>
    <property type="project" value="TreeGrafter"/>
</dbReference>
<dbReference type="GO" id="GO:0007218">
    <property type="term" value="P:neuropeptide signaling pathway"/>
    <property type="evidence" value="ECO:0007669"/>
    <property type="project" value="UniProtKB-KW"/>
</dbReference>
<dbReference type="GO" id="GO:0032098">
    <property type="term" value="P:regulation of appetite"/>
    <property type="evidence" value="ECO:0007669"/>
    <property type="project" value="Ensembl"/>
</dbReference>
<dbReference type="InterPro" id="IPR008174">
    <property type="entry name" value="Galanin"/>
</dbReference>
<dbReference type="InterPro" id="IPR039244">
    <property type="entry name" value="GALP"/>
</dbReference>
<dbReference type="PANTHER" id="PTHR20950:SF1">
    <property type="entry name" value="GALANIN-LIKE PEPTIDE"/>
    <property type="match status" value="1"/>
</dbReference>
<dbReference type="PANTHER" id="PTHR20950">
    <property type="entry name" value="GALANIN-RELATED PEPTIDE"/>
    <property type="match status" value="1"/>
</dbReference>
<dbReference type="Pfam" id="PF01296">
    <property type="entry name" value="Galanin"/>
    <property type="match status" value="1"/>
</dbReference>
<dbReference type="PROSITE" id="PS00861">
    <property type="entry name" value="GALANIN"/>
    <property type="match status" value="1"/>
</dbReference>
<accession>Q8SQD7</accession>
<accession>A5GXX3</accession>
<name>GALP_MACNE</name>
<feature type="signal peptide" evidence="1">
    <location>
        <begin position="1"/>
        <end position="23"/>
    </location>
</feature>
<feature type="chain" id="PRO_0000315041" description="Galanin-like peptide">
    <location>
        <begin position="24"/>
        <end position="83"/>
    </location>
</feature>
<feature type="propeptide" id="PRO_0000315042" evidence="1">
    <location>
        <begin position="86"/>
        <end position="115"/>
    </location>
</feature>
<feature type="splice variant" id="VSP_030461" description="In isoform 2." evidence="3">
    <original>GRGGWTLNSAGYLLGPVLHLPQMGDQDRKRETALEILDLWKAIDGLPYSHPLQPSKRNVMEAFAKPEIGDLDVLSKKIPKEEDVLK</original>
    <variation>SSTFPKWVTKTGRGRQPLR</variation>
    <location>
        <begin position="29"/>
        <end position="114"/>
    </location>
</feature>
<comment type="function">
    <molecule>Isoform 1</molecule>
    <text evidence="1">Hypothalamic neuropeptide which binds to the G-protein-coupled galanin receptors (GALR1, GALR2 and GALR3). Involved in a large number of putative physiological functions in CNS homeostatic processes, including the regulation of gonadotropin-releasing hormone secretion (By similarity).</text>
</comment>
<comment type="function">
    <molecule>Isoform 2</molecule>
    <text evidence="1">Exhibits potent and dose-dependent vasoconstrictor and anti-edema activity in the cutaneous microvasculature, a physiologic effects which does not appear to be mediated via GALR1 or GALR2. Exhibits antimicrobial activity against Gram-negative bacterias, inducing bacterial membrane blebbing (By similarity).</text>
</comment>
<comment type="subcellular location">
    <subcellularLocation>
        <location evidence="1">Secreted</location>
    </subcellularLocation>
</comment>
<comment type="alternative products">
    <event type="alternative splicing"/>
    <isoform>
        <id>Q8SQD7-1</id>
        <name>1</name>
        <sequence type="displayed"/>
    </isoform>
    <isoform>
        <id>Q8SQD7-2</id>
        <name>2</name>
        <name>Alarin</name>
        <sequence type="described" ref="VSP_030461"/>
    </isoform>
</comment>
<comment type="tissue specificity">
    <text evidence="2">Hypothalamus and pituitary gland.</text>
</comment>
<comment type="miscellaneous">
    <molecule>Isoform 2</molecule>
    <text evidence="4">Cleavage of the signal peptide generates a peptide of 25 amino acids, termed alarin because of the N-terminal alanine and the C-terminal serine. Vasoactive peptide.</text>
</comment>
<comment type="similarity">
    <text evidence="4">Belongs to the galanin family.</text>
</comment>
<keyword id="KW-0025">Alternative splicing</keyword>
<keyword id="KW-0044">Antibiotic</keyword>
<keyword id="KW-0929">Antimicrobial</keyword>
<keyword id="KW-0165">Cleavage on pair of basic residues</keyword>
<keyword id="KW-0372">Hormone</keyword>
<keyword id="KW-0527">Neuropeptide</keyword>
<keyword id="KW-1185">Reference proteome</keyword>
<keyword id="KW-0964">Secreted</keyword>
<keyword id="KW-0732">Signal</keyword>
<evidence type="ECO:0000250" key="1"/>
<evidence type="ECO:0000269" key="2">
    <source>
    </source>
</evidence>
<evidence type="ECO:0000303" key="3">
    <source ref="2"/>
</evidence>
<evidence type="ECO:0000305" key="4"/>
<gene>
    <name type="primary">GALP</name>
</gene>
<reference key="1">
    <citation type="journal article" date="2002" name="Endocrinology">
        <title>Cloning and distribution of galanin-like peptide mRNA in the hypothalamus and pituitary of the macaque.</title>
        <authorList>
            <person name="Cunningham M.J."/>
            <person name="Scarlett J.M."/>
            <person name="Steiner R.A."/>
        </authorList>
    </citation>
    <scope>NUCLEOTIDE SEQUENCE [MRNA] (ISOFORM 1)</scope>
    <scope>TISSUE SPECIFICITY</scope>
</reference>
<reference key="2">
    <citation type="submission" date="2005-08" db="EMBL/GenBank/DDBJ databases">
        <title>Alarin a novel neuropeptide derived by differential splicing of the galanin-like peptide gene.</title>
        <authorList>
            <person name="Kofler B."/>
            <person name="Voglas E."/>
            <person name="Santic R."/>
        </authorList>
    </citation>
    <scope>NUCLEOTIDE SEQUENCE [MRNA] (ISOFORM 2)</scope>
</reference>
<proteinExistence type="evidence at transcript level"/>
<protein>
    <recommendedName>
        <fullName>Galanin-like peptide</fullName>
    </recommendedName>
</protein>